<accession>Q6PI48</accession>
<feature type="transit peptide" description="Mitochondrion" evidence="3">
    <location>
        <begin position="1"/>
        <end position="47"/>
    </location>
</feature>
<feature type="chain" id="PRO_0000250736" description="Aspartate--tRNA ligase, mitochondrial">
    <location>
        <begin position="48"/>
        <end position="645"/>
    </location>
</feature>
<feature type="region of interest" description="Aspartate" evidence="1">
    <location>
        <begin position="244"/>
        <end position="247"/>
    </location>
</feature>
<feature type="binding site" evidence="1">
    <location>
        <begin position="266"/>
        <end position="268"/>
    </location>
    <ligand>
        <name>ATP</name>
        <dbReference type="ChEBI" id="CHEBI:30616"/>
    </ligand>
</feature>
<feature type="binding site" evidence="1">
    <location>
        <position position="266"/>
    </location>
    <ligand>
        <name>L-aspartate</name>
        <dbReference type="ChEBI" id="CHEBI:29991"/>
    </ligand>
</feature>
<feature type="binding site" evidence="1">
    <location>
        <position position="535"/>
    </location>
    <ligand>
        <name>ATP</name>
        <dbReference type="ChEBI" id="CHEBI:30616"/>
    </ligand>
</feature>
<feature type="binding site" evidence="1">
    <location>
        <position position="542"/>
    </location>
    <ligand>
        <name>L-aspartate</name>
        <dbReference type="ChEBI" id="CHEBI:29991"/>
    </ligand>
</feature>
<feature type="binding site" evidence="1">
    <location>
        <begin position="584"/>
        <end position="587"/>
    </location>
    <ligand>
        <name>ATP</name>
        <dbReference type="ChEBI" id="CHEBI:30616"/>
    </ligand>
</feature>
<feature type="modified residue" description="Phosphothreonine" evidence="2">
    <location>
        <position position="219"/>
    </location>
</feature>
<feature type="modified residue" description="Phosphoserine" evidence="10">
    <location>
        <position position="242"/>
    </location>
</feature>
<feature type="modified residue" description="N6-acetyllysine" evidence="9">
    <location>
        <position position="382"/>
    </location>
</feature>
<feature type="sequence variant" id="VAR_027612" description="In dbSNP:rs4427454.">
    <original>L</original>
    <variation>V</variation>
    <location>
        <position position="10"/>
    </location>
</feature>
<feature type="sequence variant" id="VAR_037015" description="In LBSL; no effect on its mitochondrial localization; dbSNP:rs121918209." evidence="5 7">
    <original>S</original>
    <variation>G</variation>
    <location>
        <position position="45"/>
    </location>
</feature>
<feature type="sequence variant" id="VAR_037016" description="In LBSL; dbSNP:rs121918208." evidence="5">
    <original>C</original>
    <variation>F</variation>
    <location>
        <position position="152"/>
    </location>
</feature>
<feature type="sequence variant" id="VAR_037017" description="In LBSL; dbSNP:rs121918210." evidence="5">
    <original>R</original>
    <variation>H</variation>
    <location>
        <position position="179"/>
    </location>
</feature>
<feature type="sequence variant" id="VAR_037018" description="In LBSL; Significant impairment of its mitochondrial matrix localization; dbSNP:rs1469160736." evidence="5 7">
    <original>Q</original>
    <variation>K</variation>
    <location>
        <position position="184"/>
    </location>
</feature>
<feature type="sequence variant" id="VAR_034525" description="In dbSNP:rs35515638.">
    <original>K</original>
    <variation>R</variation>
    <location>
        <position position="196"/>
    </location>
</feature>
<feature type="sequence variant" id="VAR_037019" description="In LBSL; dbSNP:rs772489337." evidence="5">
    <original>Q</original>
    <variation>K</variation>
    <location>
        <position position="248"/>
    </location>
</feature>
<feature type="sequence variant" id="VAR_037020" description="In LBSL; no effect on its mitochondrial localization; dbSNP:rs121918207." evidence="5 7">
    <original>R</original>
    <variation>Q</variation>
    <location>
        <position position="263"/>
    </location>
</feature>
<feature type="sequence variant" id="VAR_037021" description="In LBSL; dbSNP:rs770525873." evidence="5">
    <original>D</original>
    <variation>V</variation>
    <location>
        <position position="560"/>
    </location>
</feature>
<feature type="sequence variant" id="VAR_037022" description="In LBSL; no effect on its mitochondrial localization; dbSNP:rs121918212." evidence="5 7">
    <original>L</original>
    <variation>F</variation>
    <location>
        <position position="613"/>
    </location>
</feature>
<feature type="sequence variant" id="VAR_037023" description="In LBSL; no effect on its mitochondrial localization; dbSNP:rs121918213." evidence="5 7">
    <original>L</original>
    <variation>Q</variation>
    <location>
        <position position="626"/>
    </location>
</feature>
<feature type="sequence variant" id="VAR_037024" description="In LBSL; dbSNP:rs121918205." evidence="5">
    <original>L</original>
    <variation>V</variation>
    <location>
        <position position="626"/>
    </location>
</feature>
<feature type="sequence variant" id="VAR_037025" description="In LBSL; dbSNP:rs761675657." evidence="5">
    <original>Y</original>
    <variation>C</variation>
    <location>
        <position position="629"/>
    </location>
</feature>
<feature type="mutagenesis site" description="No effect on its mitochondria localization." evidence="7">
    <original>R</original>
    <variation>G</variation>
    <location>
        <position position="58"/>
    </location>
</feature>
<feature type="mutagenesis site" description="No effect on its mitochondria localization." evidence="7">
    <original>T</original>
    <variation>S</variation>
    <location>
        <position position="136"/>
    </location>
</feature>
<feature type="mutagenesis site" description="No effect on its mitochondria localization." evidence="7">
    <original>G</original>
    <variation>E</variation>
    <location>
        <position position="338"/>
    </location>
</feature>
<evidence type="ECO:0000250" key="1"/>
<evidence type="ECO:0000250" key="2">
    <source>
        <dbReference type="UniProtKB" id="Q3KRD0"/>
    </source>
</evidence>
<evidence type="ECO:0000255" key="3"/>
<evidence type="ECO:0000269" key="4">
    <source>
    </source>
</evidence>
<evidence type="ECO:0000269" key="5">
    <source>
    </source>
</evidence>
<evidence type="ECO:0000269" key="6">
    <source>
    </source>
</evidence>
<evidence type="ECO:0000269" key="7">
    <source>
    </source>
</evidence>
<evidence type="ECO:0000305" key="8"/>
<evidence type="ECO:0007744" key="9">
    <source>
    </source>
</evidence>
<evidence type="ECO:0007744" key="10">
    <source>
    </source>
</evidence>
<sequence length="645" mass="73563">MYFPSWLSQLYRGLSRPIRRTTQPIWGSLYRSLLQSSQRRIPEFSSFVVRTNTCGELRSSHLGQEVTLCGWIQYRRQNTFLVLRDFDGLVQVIIPQDESAASVKKILCEAPVESVVQVSGTVISRPAGQENPKMPTGEIEIKVKTAELLNACKKLPFEIKNFVKKTEALRLQYRYLDLRSFQMQYNLRLRSQMVMKMREYLCNLHGFVDIETPTLFKRTPGGAKEFLVPSREPGKFYSLPQSPQQFKQLLMVGGLDRYFQVARCYRDEGSRPDRQPEFTQIDIEMSFVDQTGIQSLIEGLLQYSWPNDKDPVVVPFPTMTFAEVLATYGTDKPDTRFGMKIIDISDVFRNTEIGFLQDALSKPHGTVKAICIPEGAKYLKRKDIESIRNFAADHFNQEILPVFLNANRNWNSPVANFIMESQRLELIRLMETQEEDVVLLTAGEHNKACSLLGKLRLECADLLETRGVVLRDPTLFSFLWVVDFPLFLPKEENPRELESAHHPFTAPHPSDIHLLYTEPKKARSQHYDLVLNGNEIGGGSIRIHNAELQRYILATLLKEDVKMLSHLLQALDYGAPPHGGIALGLDRLICLVTGSPSIRDVIAFPKSFRGHDLMSNTPDSVPPEELKPYHIRVSKPTDSKAERAH</sequence>
<name>SYDM_HUMAN</name>
<organism>
    <name type="scientific">Homo sapiens</name>
    <name type="common">Human</name>
    <dbReference type="NCBI Taxonomy" id="9606"/>
    <lineage>
        <taxon>Eukaryota</taxon>
        <taxon>Metazoa</taxon>
        <taxon>Chordata</taxon>
        <taxon>Craniata</taxon>
        <taxon>Vertebrata</taxon>
        <taxon>Euteleostomi</taxon>
        <taxon>Mammalia</taxon>
        <taxon>Eutheria</taxon>
        <taxon>Euarchontoglires</taxon>
        <taxon>Primates</taxon>
        <taxon>Haplorrhini</taxon>
        <taxon>Catarrhini</taxon>
        <taxon>Hominidae</taxon>
        <taxon>Homo</taxon>
    </lineage>
</organism>
<keyword id="KW-0002">3D-structure</keyword>
<keyword id="KW-0007">Acetylation</keyword>
<keyword id="KW-0030">Aminoacyl-tRNA synthetase</keyword>
<keyword id="KW-0067">ATP-binding</keyword>
<keyword id="KW-0225">Disease variant</keyword>
<keyword id="KW-0436">Ligase</keyword>
<keyword id="KW-0472">Membrane</keyword>
<keyword id="KW-0496">Mitochondrion</keyword>
<keyword id="KW-0547">Nucleotide-binding</keyword>
<keyword id="KW-0597">Phosphoprotein</keyword>
<keyword id="KW-0648">Protein biosynthesis</keyword>
<keyword id="KW-1267">Proteomics identification</keyword>
<keyword id="KW-1185">Reference proteome</keyword>
<keyword id="KW-0809">Transit peptide</keyword>
<proteinExistence type="evidence at protein level"/>
<protein>
    <recommendedName>
        <fullName>Aspartate--tRNA ligase, mitochondrial</fullName>
        <ecNumber evidence="4 6">6.1.1.12</ecNumber>
    </recommendedName>
    <alternativeName>
        <fullName>Aspartyl-tRNA synthetase</fullName>
        <shortName>AspRS</shortName>
    </alternativeName>
</protein>
<dbReference type="EC" id="6.1.1.12" evidence="4 6"/>
<dbReference type="EMBL" id="AL109921">
    <property type="status" value="NOT_ANNOTATED_CDS"/>
    <property type="molecule type" value="Genomic_DNA"/>
</dbReference>
<dbReference type="EMBL" id="BC045173">
    <property type="protein sequence ID" value="AAH45173.1"/>
    <property type="molecule type" value="mRNA"/>
</dbReference>
<dbReference type="CCDS" id="CCDS1311.1"/>
<dbReference type="RefSeq" id="NP_060592.2">
    <property type="nucleotide sequence ID" value="NM_018122.4"/>
</dbReference>
<dbReference type="PDB" id="4AH6">
    <property type="method" value="X-ray"/>
    <property type="resolution" value="3.70 A"/>
    <property type="chains" value="A/B/C/D=41-645"/>
</dbReference>
<dbReference type="PDBsum" id="4AH6"/>
<dbReference type="SMR" id="Q6PI48"/>
<dbReference type="BioGRID" id="120459">
    <property type="interactions" value="171"/>
</dbReference>
<dbReference type="FunCoup" id="Q6PI48">
    <property type="interactions" value="2445"/>
</dbReference>
<dbReference type="IntAct" id="Q6PI48">
    <property type="interactions" value="79"/>
</dbReference>
<dbReference type="MINT" id="Q6PI48"/>
<dbReference type="STRING" id="9606.ENSP00000497569"/>
<dbReference type="DrugBank" id="DB00128">
    <property type="generic name" value="Aspartic acid"/>
</dbReference>
<dbReference type="GlyGen" id="Q6PI48">
    <property type="glycosylation" value="1 site, 1 O-linked glycan (1 site)"/>
</dbReference>
<dbReference type="iPTMnet" id="Q6PI48"/>
<dbReference type="PhosphoSitePlus" id="Q6PI48"/>
<dbReference type="SwissPalm" id="Q6PI48"/>
<dbReference type="BioMuta" id="DARS2"/>
<dbReference type="DMDM" id="74758347"/>
<dbReference type="jPOST" id="Q6PI48"/>
<dbReference type="MassIVE" id="Q6PI48"/>
<dbReference type="PaxDb" id="9606-ENSP00000355086"/>
<dbReference type="PeptideAtlas" id="Q6PI48"/>
<dbReference type="ProteomicsDB" id="67139"/>
<dbReference type="Pumba" id="Q6PI48"/>
<dbReference type="Antibodypedia" id="20564">
    <property type="antibodies" value="174 antibodies from 24 providers"/>
</dbReference>
<dbReference type="DNASU" id="55157"/>
<dbReference type="Ensembl" id="ENST00000649689.2">
    <property type="protein sequence ID" value="ENSP00000497569.1"/>
    <property type="gene ID" value="ENSG00000117593.12"/>
</dbReference>
<dbReference type="GeneID" id="55157"/>
<dbReference type="KEGG" id="hsa:55157"/>
<dbReference type="MANE-Select" id="ENST00000649689.2">
    <property type="protein sequence ID" value="ENSP00000497569.1"/>
    <property type="RefSeq nucleotide sequence ID" value="NM_018122.5"/>
    <property type="RefSeq protein sequence ID" value="NP_060592.2"/>
</dbReference>
<dbReference type="UCSC" id="uc001gjh.3">
    <property type="organism name" value="human"/>
</dbReference>
<dbReference type="AGR" id="HGNC:25538"/>
<dbReference type="CTD" id="55157"/>
<dbReference type="DisGeNET" id="55157"/>
<dbReference type="GeneCards" id="DARS2"/>
<dbReference type="GeneReviews" id="DARS2"/>
<dbReference type="HGNC" id="HGNC:25538">
    <property type="gene designation" value="DARS2"/>
</dbReference>
<dbReference type="HPA" id="ENSG00000117593">
    <property type="expression patterns" value="Low tissue specificity"/>
</dbReference>
<dbReference type="MalaCards" id="DARS2"/>
<dbReference type="MIM" id="610956">
    <property type="type" value="gene"/>
</dbReference>
<dbReference type="MIM" id="611105">
    <property type="type" value="phenotype"/>
</dbReference>
<dbReference type="neXtProt" id="NX_Q6PI48"/>
<dbReference type="OpenTargets" id="ENSG00000117593"/>
<dbReference type="Orphanet" id="137898">
    <property type="disease" value="Leukoencephalopathy with brain stem and spinal cord involvement-high lactate syndrome"/>
</dbReference>
<dbReference type="PharmGKB" id="PA142672015"/>
<dbReference type="VEuPathDB" id="HostDB:ENSG00000117593"/>
<dbReference type="eggNOG" id="KOG2411">
    <property type="taxonomic scope" value="Eukaryota"/>
</dbReference>
<dbReference type="GeneTree" id="ENSGT01030000234618"/>
<dbReference type="HOGENOM" id="CLU_014330_3_1_1"/>
<dbReference type="InParanoid" id="Q6PI48"/>
<dbReference type="OMA" id="LCGWVDR"/>
<dbReference type="OrthoDB" id="439710at2759"/>
<dbReference type="PAN-GO" id="Q6PI48">
    <property type="GO annotations" value="3 GO annotations based on evolutionary models"/>
</dbReference>
<dbReference type="PhylomeDB" id="Q6PI48"/>
<dbReference type="TreeFam" id="TF314827"/>
<dbReference type="BRENDA" id="6.1.1.12">
    <property type="organism ID" value="2681"/>
</dbReference>
<dbReference type="PathwayCommons" id="Q6PI48"/>
<dbReference type="Reactome" id="R-HSA-379726">
    <property type="pathway name" value="Mitochondrial tRNA aminoacylation"/>
</dbReference>
<dbReference type="SignaLink" id="Q6PI48"/>
<dbReference type="SIGNOR" id="Q6PI48"/>
<dbReference type="BioGRID-ORCS" id="55157">
    <property type="hits" value="241 hits in 1165 CRISPR screens"/>
</dbReference>
<dbReference type="CD-CODE" id="5965E019">
    <property type="entry name" value="mtRNA granule"/>
</dbReference>
<dbReference type="ChiTaRS" id="DARS2">
    <property type="organism name" value="human"/>
</dbReference>
<dbReference type="EvolutionaryTrace" id="Q6PI48"/>
<dbReference type="GenomeRNAi" id="55157"/>
<dbReference type="Pharos" id="Q6PI48">
    <property type="development level" value="Tbio"/>
</dbReference>
<dbReference type="PRO" id="PR:Q6PI48"/>
<dbReference type="Proteomes" id="UP000005640">
    <property type="component" value="Chromosome 1"/>
</dbReference>
<dbReference type="RNAct" id="Q6PI48">
    <property type="molecule type" value="protein"/>
</dbReference>
<dbReference type="Bgee" id="ENSG00000117593">
    <property type="expression patterns" value="Expressed in primordial germ cell in gonad and 112 other cell types or tissues"/>
</dbReference>
<dbReference type="ExpressionAtlas" id="Q6PI48">
    <property type="expression patterns" value="baseline and differential"/>
</dbReference>
<dbReference type="GO" id="GO:0005759">
    <property type="term" value="C:mitochondrial matrix"/>
    <property type="evidence" value="ECO:0000315"/>
    <property type="project" value="UniProtKB"/>
</dbReference>
<dbReference type="GO" id="GO:0031966">
    <property type="term" value="C:mitochondrial membrane"/>
    <property type="evidence" value="ECO:0000315"/>
    <property type="project" value="UniProtKB"/>
</dbReference>
<dbReference type="GO" id="GO:0005739">
    <property type="term" value="C:mitochondrion"/>
    <property type="evidence" value="ECO:0000314"/>
    <property type="project" value="HPA"/>
</dbReference>
<dbReference type="GO" id="GO:0005654">
    <property type="term" value="C:nucleoplasm"/>
    <property type="evidence" value="ECO:0000314"/>
    <property type="project" value="HPA"/>
</dbReference>
<dbReference type="GO" id="GO:0004815">
    <property type="term" value="F:aspartate-tRNA ligase activity"/>
    <property type="evidence" value="ECO:0000314"/>
    <property type="project" value="UniProtKB"/>
</dbReference>
<dbReference type="GO" id="GO:0050560">
    <property type="term" value="F:aspartate-tRNA(Asn) ligase activity"/>
    <property type="evidence" value="ECO:0000314"/>
    <property type="project" value="BHF-UCL"/>
</dbReference>
<dbReference type="GO" id="GO:0005524">
    <property type="term" value="F:ATP binding"/>
    <property type="evidence" value="ECO:0000304"/>
    <property type="project" value="BHF-UCL"/>
</dbReference>
<dbReference type="GO" id="GO:0042803">
    <property type="term" value="F:protein homodimerization activity"/>
    <property type="evidence" value="ECO:0000353"/>
    <property type="project" value="UniProtKB"/>
</dbReference>
<dbReference type="GO" id="GO:0000049">
    <property type="term" value="F:tRNA binding"/>
    <property type="evidence" value="ECO:0000304"/>
    <property type="project" value="BHF-UCL"/>
</dbReference>
<dbReference type="GO" id="GO:0006422">
    <property type="term" value="P:aspartyl-tRNA aminoacylation"/>
    <property type="evidence" value="ECO:0000318"/>
    <property type="project" value="GO_Central"/>
</dbReference>
<dbReference type="GO" id="GO:0070145">
    <property type="term" value="P:mitochondrial asparaginyl-tRNA aminoacylation"/>
    <property type="evidence" value="ECO:0000314"/>
    <property type="project" value="UniProtKB"/>
</dbReference>
<dbReference type="GO" id="GO:0043039">
    <property type="term" value="P:tRNA aminoacylation"/>
    <property type="evidence" value="ECO:0000314"/>
    <property type="project" value="BHF-UCL"/>
</dbReference>
<dbReference type="CDD" id="cd00777">
    <property type="entry name" value="AspRS_core"/>
    <property type="match status" value="1"/>
</dbReference>
<dbReference type="CDD" id="cd04317">
    <property type="entry name" value="EcAspRS_like_N"/>
    <property type="match status" value="1"/>
</dbReference>
<dbReference type="FunFam" id="2.40.50.140:FF:000202">
    <property type="entry name" value="Aspartate--tRNA ligase, mitochondrial"/>
    <property type="match status" value="1"/>
</dbReference>
<dbReference type="FunFam" id="3.30.1360.30:FF:000002">
    <property type="entry name" value="Aspartate--tRNA ligase, mitochondrial"/>
    <property type="match status" value="1"/>
</dbReference>
<dbReference type="Gene3D" id="3.30.930.10">
    <property type="entry name" value="Bira Bifunctional Protein, Domain 2"/>
    <property type="match status" value="1"/>
</dbReference>
<dbReference type="Gene3D" id="3.30.1360.30">
    <property type="entry name" value="GAD-like domain"/>
    <property type="match status" value="1"/>
</dbReference>
<dbReference type="Gene3D" id="2.40.50.140">
    <property type="entry name" value="Nucleic acid-binding proteins"/>
    <property type="match status" value="1"/>
</dbReference>
<dbReference type="HAMAP" id="MF_00044">
    <property type="entry name" value="Asp_tRNA_synth_type1"/>
    <property type="match status" value="1"/>
</dbReference>
<dbReference type="InterPro" id="IPR004364">
    <property type="entry name" value="Aa-tRNA-synt_II"/>
</dbReference>
<dbReference type="InterPro" id="IPR006195">
    <property type="entry name" value="aa-tRNA-synth_II"/>
</dbReference>
<dbReference type="InterPro" id="IPR045864">
    <property type="entry name" value="aa-tRNA-synth_II/BPL/LPL"/>
</dbReference>
<dbReference type="InterPro" id="IPR004524">
    <property type="entry name" value="Asp-tRNA-ligase_1"/>
</dbReference>
<dbReference type="InterPro" id="IPR047089">
    <property type="entry name" value="Asp-tRNA-ligase_1_N"/>
</dbReference>
<dbReference type="InterPro" id="IPR002312">
    <property type="entry name" value="Asp/Asn-tRNA-synth_IIb"/>
</dbReference>
<dbReference type="InterPro" id="IPR047090">
    <property type="entry name" value="AspRS_core"/>
</dbReference>
<dbReference type="InterPro" id="IPR004115">
    <property type="entry name" value="GAD-like_sf"/>
</dbReference>
<dbReference type="InterPro" id="IPR029351">
    <property type="entry name" value="GAD_dom"/>
</dbReference>
<dbReference type="InterPro" id="IPR012340">
    <property type="entry name" value="NA-bd_OB-fold"/>
</dbReference>
<dbReference type="InterPro" id="IPR004365">
    <property type="entry name" value="NA-bd_OB_tRNA"/>
</dbReference>
<dbReference type="NCBIfam" id="TIGR00459">
    <property type="entry name" value="aspS_bact"/>
    <property type="match status" value="1"/>
</dbReference>
<dbReference type="NCBIfam" id="NF001750">
    <property type="entry name" value="PRK00476.1"/>
    <property type="match status" value="1"/>
</dbReference>
<dbReference type="PANTHER" id="PTHR22594:SF5">
    <property type="entry name" value="ASPARTATE--TRNA LIGASE, MITOCHONDRIAL"/>
    <property type="match status" value="1"/>
</dbReference>
<dbReference type="PANTHER" id="PTHR22594">
    <property type="entry name" value="ASPARTYL/LYSYL-TRNA SYNTHETASE"/>
    <property type="match status" value="1"/>
</dbReference>
<dbReference type="Pfam" id="PF02938">
    <property type="entry name" value="GAD"/>
    <property type="match status" value="1"/>
</dbReference>
<dbReference type="Pfam" id="PF00152">
    <property type="entry name" value="tRNA-synt_2"/>
    <property type="match status" value="1"/>
</dbReference>
<dbReference type="Pfam" id="PF01336">
    <property type="entry name" value="tRNA_anti-codon"/>
    <property type="match status" value="1"/>
</dbReference>
<dbReference type="PRINTS" id="PR01042">
    <property type="entry name" value="TRNASYNTHASP"/>
</dbReference>
<dbReference type="SUPFAM" id="SSF55681">
    <property type="entry name" value="Class II aaRS and biotin synthetases"/>
    <property type="match status" value="1"/>
</dbReference>
<dbReference type="SUPFAM" id="SSF55261">
    <property type="entry name" value="GAD domain-like"/>
    <property type="match status" value="1"/>
</dbReference>
<dbReference type="SUPFAM" id="SSF50249">
    <property type="entry name" value="Nucleic acid-binding proteins"/>
    <property type="match status" value="1"/>
</dbReference>
<dbReference type="PROSITE" id="PS50862">
    <property type="entry name" value="AA_TRNA_LIGASE_II"/>
    <property type="match status" value="1"/>
</dbReference>
<reference key="1">
    <citation type="journal article" date="2006" name="Nature">
        <title>The DNA sequence and biological annotation of human chromosome 1.</title>
        <authorList>
            <person name="Gregory S.G."/>
            <person name="Barlow K.F."/>
            <person name="McLay K.E."/>
            <person name="Kaul R."/>
            <person name="Swarbreck D."/>
            <person name="Dunham A."/>
            <person name="Scott C.E."/>
            <person name="Howe K.L."/>
            <person name="Woodfine K."/>
            <person name="Spencer C.C.A."/>
            <person name="Jones M.C."/>
            <person name="Gillson C."/>
            <person name="Searle S."/>
            <person name="Zhou Y."/>
            <person name="Kokocinski F."/>
            <person name="McDonald L."/>
            <person name="Evans R."/>
            <person name="Phillips K."/>
            <person name="Atkinson A."/>
            <person name="Cooper R."/>
            <person name="Jones C."/>
            <person name="Hall R.E."/>
            <person name="Andrews T.D."/>
            <person name="Lloyd C."/>
            <person name="Ainscough R."/>
            <person name="Almeida J.P."/>
            <person name="Ambrose K.D."/>
            <person name="Anderson F."/>
            <person name="Andrew R.W."/>
            <person name="Ashwell R.I.S."/>
            <person name="Aubin K."/>
            <person name="Babbage A.K."/>
            <person name="Bagguley C.L."/>
            <person name="Bailey J."/>
            <person name="Beasley H."/>
            <person name="Bethel G."/>
            <person name="Bird C.P."/>
            <person name="Bray-Allen S."/>
            <person name="Brown J.Y."/>
            <person name="Brown A.J."/>
            <person name="Buckley D."/>
            <person name="Burton J."/>
            <person name="Bye J."/>
            <person name="Carder C."/>
            <person name="Chapman J.C."/>
            <person name="Clark S.Y."/>
            <person name="Clarke G."/>
            <person name="Clee C."/>
            <person name="Cobley V."/>
            <person name="Collier R.E."/>
            <person name="Corby N."/>
            <person name="Coville G.J."/>
            <person name="Davies J."/>
            <person name="Deadman R."/>
            <person name="Dunn M."/>
            <person name="Earthrowl M."/>
            <person name="Ellington A.G."/>
            <person name="Errington H."/>
            <person name="Frankish A."/>
            <person name="Frankland J."/>
            <person name="French L."/>
            <person name="Garner P."/>
            <person name="Garnett J."/>
            <person name="Gay L."/>
            <person name="Ghori M.R.J."/>
            <person name="Gibson R."/>
            <person name="Gilby L.M."/>
            <person name="Gillett W."/>
            <person name="Glithero R.J."/>
            <person name="Grafham D.V."/>
            <person name="Griffiths C."/>
            <person name="Griffiths-Jones S."/>
            <person name="Grocock R."/>
            <person name="Hammond S."/>
            <person name="Harrison E.S.I."/>
            <person name="Hart E."/>
            <person name="Haugen E."/>
            <person name="Heath P.D."/>
            <person name="Holmes S."/>
            <person name="Holt K."/>
            <person name="Howden P.J."/>
            <person name="Hunt A.R."/>
            <person name="Hunt S.E."/>
            <person name="Hunter G."/>
            <person name="Isherwood J."/>
            <person name="James R."/>
            <person name="Johnson C."/>
            <person name="Johnson D."/>
            <person name="Joy A."/>
            <person name="Kay M."/>
            <person name="Kershaw J.K."/>
            <person name="Kibukawa M."/>
            <person name="Kimberley A.M."/>
            <person name="King A."/>
            <person name="Knights A.J."/>
            <person name="Lad H."/>
            <person name="Laird G."/>
            <person name="Lawlor S."/>
            <person name="Leongamornlert D.A."/>
            <person name="Lloyd D.M."/>
            <person name="Loveland J."/>
            <person name="Lovell J."/>
            <person name="Lush M.J."/>
            <person name="Lyne R."/>
            <person name="Martin S."/>
            <person name="Mashreghi-Mohammadi M."/>
            <person name="Matthews L."/>
            <person name="Matthews N.S.W."/>
            <person name="McLaren S."/>
            <person name="Milne S."/>
            <person name="Mistry S."/>
            <person name="Moore M.J.F."/>
            <person name="Nickerson T."/>
            <person name="O'Dell C.N."/>
            <person name="Oliver K."/>
            <person name="Palmeiri A."/>
            <person name="Palmer S.A."/>
            <person name="Parker A."/>
            <person name="Patel D."/>
            <person name="Pearce A.V."/>
            <person name="Peck A.I."/>
            <person name="Pelan S."/>
            <person name="Phelps K."/>
            <person name="Phillimore B.J."/>
            <person name="Plumb R."/>
            <person name="Rajan J."/>
            <person name="Raymond C."/>
            <person name="Rouse G."/>
            <person name="Saenphimmachak C."/>
            <person name="Sehra H.K."/>
            <person name="Sheridan E."/>
            <person name="Shownkeen R."/>
            <person name="Sims S."/>
            <person name="Skuce C.D."/>
            <person name="Smith M."/>
            <person name="Steward C."/>
            <person name="Subramanian S."/>
            <person name="Sycamore N."/>
            <person name="Tracey A."/>
            <person name="Tromans A."/>
            <person name="Van Helmond Z."/>
            <person name="Wall M."/>
            <person name="Wallis J.M."/>
            <person name="White S."/>
            <person name="Whitehead S.L."/>
            <person name="Wilkinson J.E."/>
            <person name="Willey D.L."/>
            <person name="Williams H."/>
            <person name="Wilming L."/>
            <person name="Wray P.W."/>
            <person name="Wu Z."/>
            <person name="Coulson A."/>
            <person name="Vaudin M."/>
            <person name="Sulston J.E."/>
            <person name="Durbin R.M."/>
            <person name="Hubbard T."/>
            <person name="Wooster R."/>
            <person name="Dunham I."/>
            <person name="Carter N.P."/>
            <person name="McVean G."/>
            <person name="Ross M.T."/>
            <person name="Harrow J."/>
            <person name="Olson M.V."/>
            <person name="Beck S."/>
            <person name="Rogers J."/>
            <person name="Bentley D.R."/>
        </authorList>
    </citation>
    <scope>NUCLEOTIDE SEQUENCE [LARGE SCALE GENOMIC DNA]</scope>
</reference>
<reference key="2">
    <citation type="journal article" date="2004" name="Genome Res.">
        <title>The status, quality, and expansion of the NIH full-length cDNA project: the Mammalian Gene Collection (MGC).</title>
        <authorList>
            <consortium name="The MGC Project Team"/>
        </authorList>
    </citation>
    <scope>NUCLEOTIDE SEQUENCE [LARGE SCALE MRNA]</scope>
    <source>
        <tissue>Testis</tissue>
    </source>
</reference>
<reference key="3">
    <citation type="journal article" date="2005" name="Biochemistry">
        <title>Toward the full set of human mitochondrial aminoacyl-tRNA synthetases: characterization of AspRS and TyrRS.</title>
        <authorList>
            <person name="Bonnefond L."/>
            <person name="Fender A."/>
            <person name="Rudinger-Thirion J."/>
            <person name="Giege R."/>
            <person name="Florentz C."/>
            <person name="Sissler M."/>
        </authorList>
    </citation>
    <scope>SUBCELLULAR LOCATION</scope>
    <scope>SUBUNIT</scope>
    <scope>CATALYTIC ACTIVITY</scope>
    <scope>FUNCTION</scope>
</reference>
<reference key="4">
    <citation type="journal article" date="2009" name="Science">
        <title>Lysine acetylation targets protein complexes and co-regulates major cellular functions.</title>
        <authorList>
            <person name="Choudhary C."/>
            <person name="Kumar C."/>
            <person name="Gnad F."/>
            <person name="Nielsen M.L."/>
            <person name="Rehman M."/>
            <person name="Walther T.C."/>
            <person name="Olsen J.V."/>
            <person name="Mann M."/>
        </authorList>
    </citation>
    <scope>ACETYLATION [LARGE SCALE ANALYSIS] AT LYS-382</scope>
    <scope>IDENTIFICATION BY MASS SPECTROMETRY [LARGE SCALE ANALYSIS]</scope>
</reference>
<reference key="5">
    <citation type="journal article" date="2011" name="BMC Syst. Biol.">
        <title>Initial characterization of the human central proteome.</title>
        <authorList>
            <person name="Burkard T.R."/>
            <person name="Planyavsky M."/>
            <person name="Kaupe I."/>
            <person name="Breitwieser F.P."/>
            <person name="Buerckstuemmer T."/>
            <person name="Bennett K.L."/>
            <person name="Superti-Furga G."/>
            <person name="Colinge J."/>
        </authorList>
    </citation>
    <scope>IDENTIFICATION BY MASS SPECTROMETRY [LARGE SCALE ANALYSIS]</scope>
</reference>
<reference key="6">
    <citation type="journal article" date="2013" name="J. Proteome Res.">
        <title>Toward a comprehensive characterization of a human cancer cell phosphoproteome.</title>
        <authorList>
            <person name="Zhou H."/>
            <person name="Di Palma S."/>
            <person name="Preisinger C."/>
            <person name="Peng M."/>
            <person name="Polat A.N."/>
            <person name="Heck A.J."/>
            <person name="Mohammed S."/>
        </authorList>
    </citation>
    <scope>PHOSPHORYLATION [LARGE SCALE ANALYSIS] AT SER-242</scope>
    <scope>IDENTIFICATION BY MASS SPECTROMETRY [LARGE SCALE ANALYSIS]</scope>
    <source>
        <tissue>Cervix carcinoma</tissue>
        <tissue>Erythroleukemia</tissue>
    </source>
</reference>
<reference key="7">
    <citation type="journal article" date="2014" name="J. Proteomics">
        <title>An enzyme assisted RP-RPLC approach for in-depth analysis of human liver phosphoproteome.</title>
        <authorList>
            <person name="Bian Y."/>
            <person name="Song C."/>
            <person name="Cheng K."/>
            <person name="Dong M."/>
            <person name="Wang F."/>
            <person name="Huang J."/>
            <person name="Sun D."/>
            <person name="Wang L."/>
            <person name="Ye M."/>
            <person name="Zou H."/>
        </authorList>
    </citation>
    <scope>IDENTIFICATION BY MASS SPECTROMETRY [LARGE SCALE ANALYSIS]</scope>
    <source>
        <tissue>Liver</tissue>
    </source>
</reference>
<reference key="8">
    <citation type="journal article" date="2015" name="Proteomics">
        <title>N-terminome analysis of the human mitochondrial proteome.</title>
        <authorList>
            <person name="Vaca Jacome A.S."/>
            <person name="Rabilloud T."/>
            <person name="Schaeffer-Reiss C."/>
            <person name="Rompais M."/>
            <person name="Ayoub D."/>
            <person name="Lane L."/>
            <person name="Bairoch A."/>
            <person name="Van Dorsselaer A."/>
            <person name="Carapito C."/>
        </authorList>
    </citation>
    <scope>IDENTIFICATION BY MASS SPECTROMETRY [LARGE SCALE ANALYSIS]</scope>
</reference>
<reference key="9">
    <citation type="journal article" date="2013" name="Nucleic Acids Res.">
        <title>Thermodynamic properties distinguish human mitochondrial aspartyl-tRNA synthetase from bacterial homolog with same 3D architecture.</title>
        <authorList>
            <person name="Neuenfeldt A."/>
            <person name="Lorber B."/>
            <person name="Ennifar E."/>
            <person name="Gaudry A."/>
            <person name="Sauter C."/>
            <person name="Sissler M."/>
            <person name="Florentz C."/>
        </authorList>
    </citation>
    <scope>X-RAY CRYSTALLOGRAPHY (3.70 ANGSTROMS) OF 41-645</scope>
    <scope>SUBUNIT</scope>
    <scope>CATALYTIC ACTIVITY</scope>
    <scope>FUNCTION</scope>
</reference>
<reference key="10">
    <citation type="journal article" date="2007" name="Nat. Genet.">
        <title>Mitochondrial aspartyl-tRNA synthetase deficiency causes leukoencephalopathy with brain stem and spinal cord involvement and lactate elevation.</title>
        <authorList>
            <person name="Scheper G.C."/>
            <person name="van der Klok T."/>
            <person name="van Andel R.J."/>
            <person name="van Berkel C.G.M."/>
            <person name="Sissler M."/>
            <person name="Smet J."/>
            <person name="Muravina T.I."/>
            <person name="Serkov S.V."/>
            <person name="Uziel G."/>
            <person name="Bugiani M."/>
            <person name="Schiffmann R."/>
            <person name="Kraegeloh-Mann I."/>
            <person name="Smeitink J.A.M."/>
            <person name="Florentz C."/>
            <person name="Van Coster R."/>
            <person name="Pronk J.C."/>
            <person name="van der Knaap M.S."/>
        </authorList>
    </citation>
    <scope>VARIANTS LBSL GLY-45; PHE-152; HIS-179; LYS-184; LYS-248; GLN-263; VAL-560; PHE-613; VAL-626; GLN-626 AND CYS-629</scope>
</reference>
<reference key="11">
    <citation type="journal article" date="2018" name="J. Biol. Chem.">
        <title>Three human aminoacyl-tRNA synthetases have distinct sub-mitochondrial localizations that are unaffected by disease-associated mutations.</title>
        <authorList>
            <person name="Gonzalez-Serrano L.E."/>
            <person name="Karim L."/>
            <person name="Pierre F."/>
            <person name="Schwenzer H."/>
            <person name="Roetig A."/>
            <person name="Munnich A."/>
            <person name="Sissler M."/>
        </authorList>
    </citation>
    <scope>CHARACTERIZATION OF VARIANTS LBSL GLY-45; LYS-184; LYS-GLN-263; PHE-613; VAL-626 AND GLN-626</scope>
    <scope>MUTAGENESIS OF ARG-58; THR-136 AND GLY-338</scope>
    <scope>SUBCELLULAR LOCATION</scope>
</reference>
<gene>
    <name type="primary">DARS2</name>
</gene>
<comment type="function">
    <text evidence="4 6">Catalyzes the attachment of aspartate to tRNA(Asp) in a two-step reaction: aspartate is first activated by ATP to form Asp-AMP and then transferred to the acceptor end of tRNA(Asp).</text>
</comment>
<comment type="catalytic activity">
    <reaction evidence="4 6">
        <text>tRNA(Asp) + L-aspartate + ATP = L-aspartyl-tRNA(Asp) + AMP + diphosphate</text>
        <dbReference type="Rhea" id="RHEA:19649"/>
        <dbReference type="Rhea" id="RHEA-COMP:9660"/>
        <dbReference type="Rhea" id="RHEA-COMP:9678"/>
        <dbReference type="ChEBI" id="CHEBI:29991"/>
        <dbReference type="ChEBI" id="CHEBI:30616"/>
        <dbReference type="ChEBI" id="CHEBI:33019"/>
        <dbReference type="ChEBI" id="CHEBI:78442"/>
        <dbReference type="ChEBI" id="CHEBI:78516"/>
        <dbReference type="ChEBI" id="CHEBI:456215"/>
        <dbReference type="EC" id="6.1.1.12"/>
    </reaction>
</comment>
<comment type="subunit">
    <text evidence="4 6">Homodimer.</text>
</comment>
<comment type="interaction">
    <interactant intactId="EBI-3917045">
        <id>Q6PI48</id>
    </interactant>
    <interactant intactId="EBI-1210304">
        <id>P54886</id>
        <label>ALDH18A1</label>
    </interactant>
    <organismsDiffer>false</organismsDiffer>
    <experiments>3</experiments>
</comment>
<comment type="interaction">
    <interactant intactId="EBI-3917045">
        <id>Q6PI48</id>
    </interactant>
    <interactant intactId="EBI-3921628">
        <id>Q16853</id>
        <label>AOC3</label>
    </interactant>
    <organismsDiffer>false</organismsDiffer>
    <experiments>3</experiments>
</comment>
<comment type="interaction">
    <interactant intactId="EBI-3917045">
        <id>Q6PI48</id>
    </interactant>
    <interactant intactId="EBI-358858">
        <id>O14735</id>
        <label>CDIPT</label>
    </interactant>
    <organismsDiffer>false</organismsDiffer>
    <experiments>3</experiments>
</comment>
<comment type="interaction">
    <interactant intactId="EBI-3917045">
        <id>Q6PI48</id>
    </interactant>
    <interactant intactId="EBI-349854">
        <id>P13569</id>
        <label>CFTR</label>
    </interactant>
    <organismsDiffer>false</organismsDiffer>
    <experiments>5</experiments>
</comment>
<comment type="interaction">
    <interactant intactId="EBI-3917045">
        <id>Q6PI48</id>
    </interactant>
    <interactant intactId="EBI-10241815">
        <id>Q4VAQ0</id>
        <label>COL8A2</label>
    </interactant>
    <organismsDiffer>false</organismsDiffer>
    <experiments>3</experiments>
</comment>
<comment type="interaction">
    <interactant intactId="EBI-3917045">
        <id>Q6PI48</id>
    </interactant>
    <interactant intactId="EBI-8646596">
        <id>P49447</id>
        <label>CYB561</label>
    </interactant>
    <organismsDiffer>false</organismsDiffer>
    <experiments>3</experiments>
</comment>
<comment type="interaction">
    <interactant intactId="EBI-3917045">
        <id>Q6PI48</id>
    </interactant>
    <interactant intactId="EBI-13049494">
        <id>Q9UGM5</id>
        <label>FETUB</label>
    </interactant>
    <organismsDiffer>false</organismsDiffer>
    <experiments>3</experiments>
</comment>
<comment type="interaction">
    <interactant intactId="EBI-3917045">
        <id>Q6PI48</id>
    </interactant>
    <interactant intactId="EBI-1057431">
        <id>O14556</id>
        <label>GAPDHS</label>
    </interactant>
    <organismsDiffer>false</organismsDiffer>
    <experiments>2</experiments>
</comment>
<comment type="interaction">
    <interactant intactId="EBI-3917045">
        <id>Q6PI48</id>
    </interactant>
    <interactant intactId="EBI-352528">
        <id>P10809</id>
        <label>HSPD1</label>
    </interactant>
    <organismsDiffer>false</organismsDiffer>
    <experiments>5</experiments>
</comment>
<comment type="interaction">
    <interactant intactId="EBI-3917045">
        <id>Q6PI48</id>
    </interactant>
    <interactant intactId="EBI-608347">
        <id>Q04941</id>
        <label>PLP2</label>
    </interactant>
    <organismsDiffer>false</organismsDiffer>
    <experiments>3</experiments>
</comment>
<comment type="interaction">
    <interactant intactId="EBI-3917045">
        <id>Q6PI48</id>
    </interactant>
    <interactant intactId="EBI-311394">
        <id>Q9C0I4</id>
        <label>THSD7B</label>
    </interactant>
    <organismsDiffer>false</organismsDiffer>
    <experiments>3</experiments>
</comment>
<comment type="interaction">
    <interactant intactId="EBI-3917045">
        <id>Q6PI48</id>
    </interactant>
    <interactant intactId="EBI-11528917">
        <id>Q8WW34-2</id>
        <label>TMEM239</label>
    </interactant>
    <organismsDiffer>false</organismsDiffer>
    <experiments>3</experiments>
</comment>
<comment type="interaction">
    <interactant intactId="EBI-3917045">
        <id>Q6PI48</id>
    </interactant>
    <interactant intactId="EBI-12045841">
        <id>Q86UF1</id>
        <label>TSPAN33</label>
    </interactant>
    <organismsDiffer>false</organismsDiffer>
    <experiments>3</experiments>
</comment>
<comment type="interaction">
    <interactant intactId="EBI-3917045">
        <id>Q6PI48</id>
    </interactant>
    <interactant intactId="EBI-7601760">
        <id>Q53HI1</id>
        <label>UNC50</label>
    </interactant>
    <organismsDiffer>false</organismsDiffer>
    <experiments>3</experiments>
</comment>
<comment type="subcellular location">
    <subcellularLocation>
        <location evidence="4 7">Mitochondrion matrix</location>
    </subcellularLocation>
    <subcellularLocation>
        <location evidence="7">Mitochondrion membrane</location>
    </subcellularLocation>
</comment>
<comment type="disease" evidence="5 7">
    <disease id="DI-01899">
        <name>Leukoencephalopathy with brainstem and spinal cord involvement and lactate elevation</name>
        <acronym>LBSL</acronym>
        <description>Autosomal recessive disease and is defined on the basis of a highly characteristic constellation of abnormalities observed by magnetic resonance imaging and spectroscopy. Affected individuals develop slowly progressive cerebellar ataxia, spasticity, and dorsal column dysfunction, sometimes with a mild cognitive deficit or decline.</description>
        <dbReference type="MIM" id="611105"/>
    </disease>
    <text>The disease is caused by variants affecting the gene represented in this entry.</text>
</comment>
<comment type="similarity">
    <text evidence="8">Belongs to the class-II aminoacyl-tRNA synthetase family. Type 1 subfamily.</text>
</comment>